<organism>
    <name type="scientific">Homo sapiens</name>
    <name type="common">Human</name>
    <dbReference type="NCBI Taxonomy" id="9606"/>
    <lineage>
        <taxon>Eukaryota</taxon>
        <taxon>Metazoa</taxon>
        <taxon>Chordata</taxon>
        <taxon>Craniata</taxon>
        <taxon>Vertebrata</taxon>
        <taxon>Euteleostomi</taxon>
        <taxon>Mammalia</taxon>
        <taxon>Eutheria</taxon>
        <taxon>Euarchontoglires</taxon>
        <taxon>Primates</taxon>
        <taxon>Haplorrhini</taxon>
        <taxon>Catarrhini</taxon>
        <taxon>Hominidae</taxon>
        <taxon>Homo</taxon>
    </lineage>
</organism>
<evidence type="ECO:0000250" key="1">
    <source>
        <dbReference type="UniProtKB" id="Q63955"/>
    </source>
</evidence>
<evidence type="ECO:0000255" key="2">
    <source>
        <dbReference type="PROSITE-ProRule" id="PRU00108"/>
    </source>
</evidence>
<evidence type="ECO:0000255" key="3">
    <source>
        <dbReference type="PROSITE-ProRule" id="PRU00530"/>
    </source>
</evidence>
<evidence type="ECO:0000269" key="4">
    <source>
    </source>
</evidence>
<evidence type="ECO:0000269" key="5">
    <source>
    </source>
</evidence>
<evidence type="ECO:0000269" key="6">
    <source>
    </source>
</evidence>
<evidence type="ECO:0000269" key="7">
    <source>
    </source>
</evidence>
<evidence type="ECO:0000269" key="8">
    <source>
    </source>
</evidence>
<evidence type="ECO:0000269" key="9">
    <source>
    </source>
</evidence>
<evidence type="ECO:0000269" key="10">
    <source>
    </source>
</evidence>
<evidence type="ECO:0000269" key="11">
    <source>
    </source>
</evidence>
<evidence type="ECO:0000269" key="12">
    <source>
    </source>
</evidence>
<evidence type="ECO:0000305" key="13"/>
<feature type="chain" id="PRO_0000100742" description="POU domain, class 4, transcription factor 3">
    <location>
        <begin position="1"/>
        <end position="338"/>
    </location>
</feature>
<feature type="domain" description="POU-specific" evidence="3">
    <location>
        <begin position="179"/>
        <end position="256"/>
    </location>
</feature>
<feature type="DNA-binding region" description="Homeobox" evidence="2">
    <location>
        <begin position="274"/>
        <end position="333"/>
    </location>
</feature>
<feature type="short sequence motif" description="POU-IV box">
    <location>
        <begin position="56"/>
        <end position="65"/>
    </location>
</feature>
<feature type="sequence variant" id="VAR_079859" description="In DFNA15." evidence="9">
    <original>D</original>
    <variation>V</variation>
    <location>
        <position position="64"/>
    </location>
</feature>
<feature type="sequence variant" id="VAR_079860" description="In DFNA15." evidence="9">
    <location>
        <begin position="143"/>
        <end position="338"/>
    </location>
</feature>
<feature type="sequence variant" id="VAR_079861" description="In DFNA15; uncertain significance; dbSNP:rs367737951." evidence="8">
    <original>P</original>
    <variation>R</variation>
    <location>
        <position position="164"/>
    </location>
</feature>
<feature type="sequence variant" id="VAR_079862" description="In DFNA15." evidence="9">
    <location>
        <begin position="192"/>
        <end position="338"/>
    </location>
</feature>
<feature type="sequence variant" id="VAR_079863" description="In DFNA15; dbSNP:rs1760429015." evidence="9">
    <original>F</original>
    <variation>Y</variation>
    <location>
        <position position="194"/>
    </location>
</feature>
<feature type="sequence variant" id="VAR_079864" description="In DFNA15; dbSNP:rs1760431074." evidence="9">
    <original>S</original>
    <variation>L</variation>
    <location>
        <position position="222"/>
    </location>
</feature>
<feature type="sequence variant" id="VAR_045682" description="In DFNA15; decreases subcellular localization in the nucleus; decreases DNA-binding activity; decreases transcriptional activity; dbSNP:rs121909057." evidence="4">
    <original>L</original>
    <variation>P</variation>
    <location>
        <position position="223"/>
    </location>
</feature>
<feature type="sequence variant" id="VAR_079865" description="In DFNA15; uncertain significance; dbSNP:rs2126961780." evidence="6">
    <original>E</original>
    <variation>K</variation>
    <location>
        <position position="232"/>
    </location>
</feature>
<feature type="sequence variant" id="VAR_079866" description="In DFNA15." evidence="9">
    <original>N</original>
    <variation>Y</variation>
    <location>
        <position position="240"/>
    </location>
</feature>
<feature type="sequence variant" id="VAR_079867" description="In DFNA15." evidence="9">
    <original>I</original>
    <variation>V</variation>
    <location>
        <position position="281"/>
    </location>
</feature>
<feature type="sequence variant" id="VAR_045683" description="In DFNA15; decreases subcellular localization in the nucleus; decreases DNA-binding activity; decreases transcriptional activity; dbSNP:rs121909056." evidence="4 5">
    <original>L</original>
    <variation>F</variation>
    <location>
        <position position="289"/>
    </location>
</feature>
<feature type="sequence variant" id="VAR_079868" description="In DFNA15." evidence="9">
    <original>P</original>
    <variation>L</variation>
    <location>
        <position position="299"/>
    </location>
</feature>
<feature type="sequence variant" id="VAR_079869" description="In DFNA15." evidence="9">
    <location>
        <begin position="326"/>
        <end position="338"/>
    </location>
</feature>
<feature type="sequence variant" id="VAR_079870" description="In DFNA15; dbSNP:rs398123070." evidence="7">
    <original>R</original>
    <variation>K</variation>
    <location>
        <position position="326"/>
    </location>
</feature>
<feature type="sequence variant" id="VAR_079871" description="In DFNA15; decreases subcellular localization in the nucleus; dbSNP:rs1339291105." evidence="10">
    <original>K</original>
    <variation>E</variation>
    <location>
        <position position="328"/>
    </location>
</feature>
<feature type="sequence conflict" description="In Ref. 2; AAC06203." evidence="13" ref="2">
    <original>S</original>
    <variation>F</variation>
    <location>
        <position position="67"/>
    </location>
</feature>
<sequence length="338" mass="37052">MMAMNSKQPFGMHPVLQEPKFSSLHSGSEAMRRVCLPAPQLQGNIFGSFDESLLARAEALAAVDIVSHGKNHPFKPDATYHTMSSVPCTSTSSTVPISHPAALTSHPHHAVHQGLEGDLLEHISPTLSVSGLGAPEHSVMPAQIHPHHLGAMGHLHQAMGMSHPHTVAPHSAMPACLSDVESDPRELEAFAERFKQRRIKLGVTQADVGAALANLKIPGVGSLSQSTICRFESLTLSHNNMIALKPVLQAWLEEAEAAYREKNSKPELFNGSERKRKRTSIAAPEKRSLEAYFAIQPRPSSEKIAAIAEKLDLKKNVVRVWFCNQRQKQKRMKYSAVH</sequence>
<accession>Q15319</accession>
<accession>O60557</accession>
<accession>Q2M3F8</accession>
<protein>
    <recommendedName>
        <fullName>POU domain, class 4, transcription factor 3</fullName>
    </recommendedName>
    <alternativeName>
        <fullName>Brain-specific homeobox/POU domain protein 3C</fullName>
        <shortName>Brain-3C</shortName>
        <shortName>Brn-3C</shortName>
    </alternativeName>
</protein>
<keyword id="KW-0010">Activator</keyword>
<keyword id="KW-0963">Cytoplasm</keyword>
<keyword id="KW-0209">Deafness</keyword>
<keyword id="KW-0221">Differentiation</keyword>
<keyword id="KW-0225">Disease variant</keyword>
<keyword id="KW-0238">DNA-binding</keyword>
<keyword id="KW-0371">Homeobox</keyword>
<keyword id="KW-1010">Non-syndromic deafness</keyword>
<keyword id="KW-0539">Nucleus</keyword>
<keyword id="KW-1185">Reference proteome</keyword>
<keyword id="KW-0804">Transcription</keyword>
<keyword id="KW-0805">Transcription regulation</keyword>
<comment type="function">
    <text evidence="1 4">Acts as a transcriptional activator (PubMed:18228599). Acts by binding to sequences related to the consensus octamer motif 5'-ATGCAAAT-3' in the regulatory regions of its target genes (PubMed:18228599). Involved in the auditory system development, required for terminal differentiation of hair cells in the inner ear (By similarity).</text>
</comment>
<comment type="subunit">
    <text evidence="1">Interacts with ISL1.</text>
</comment>
<comment type="interaction">
    <interactant intactId="EBI-12033574">
        <id>Q15319</id>
    </interactant>
    <interactant intactId="EBI-7357329">
        <id>Q9H596</id>
        <label>DUSP21</label>
    </interactant>
    <organismsDiffer>false</organismsDiffer>
    <experiments>3</experiments>
</comment>
<comment type="interaction">
    <interactant intactId="EBI-12033574">
        <id>Q15319</id>
    </interactant>
    <interactant intactId="EBI-618309">
        <id>Q08379</id>
        <label>GOLGA2</label>
    </interactant>
    <organismsDiffer>false</organismsDiffer>
    <experiments>3</experiments>
</comment>
<comment type="interaction">
    <interactant intactId="EBI-12033574">
        <id>Q15319</id>
    </interactant>
    <interactant intactId="EBI-948001">
        <id>Q15323</id>
        <label>KRT31</label>
    </interactant>
    <organismsDiffer>false</organismsDiffer>
    <experiments>3</experiments>
</comment>
<comment type="interaction">
    <interactant intactId="EBI-12033574">
        <id>Q15319</id>
    </interactant>
    <interactant intactId="EBI-22311199">
        <id>Q3LI67</id>
        <label>KRTAP6-3</label>
    </interactant>
    <organismsDiffer>false</organismsDiffer>
    <experiments>3</experiments>
</comment>
<comment type="interaction">
    <interactant intactId="EBI-12033574">
        <id>Q15319</id>
    </interactant>
    <interactant intactId="EBI-12868744">
        <id>P0CG21</id>
        <label>NHLRC4</label>
    </interactant>
    <organismsDiffer>false</organismsDiffer>
    <experiments>3</experiments>
</comment>
<comment type="interaction">
    <interactant intactId="EBI-12033574">
        <id>Q15319</id>
    </interactant>
    <interactant intactId="EBI-726466">
        <id>O15496</id>
        <label>PLA2G10</label>
    </interactant>
    <organismsDiffer>false</organismsDiffer>
    <experiments>3</experiments>
</comment>
<comment type="subcellular location">
    <subcellularLocation>
        <location evidence="4 10">Nucleus</location>
    </subcellularLocation>
    <subcellularLocation>
        <location evidence="10">Cytoplasm</location>
    </subcellularLocation>
    <text evidence="10">Preferentially localized in the nucleus.</text>
</comment>
<comment type="tissue specificity">
    <text evidence="11 12">Brain. Seems to be specific to the retina.</text>
</comment>
<comment type="disease" evidence="4 5 6 7 8 9 10 12">
    <disease id="DI-00844">
        <name>Deafness, autosomal dominant, 15</name>
        <acronym>DFNA15</acronym>
        <description>A form of non-syndromic hearing loss with variable phenotype in terms of age at onset, levels of progression, and shape of audiograms.</description>
        <dbReference type="MIM" id="602459"/>
    </disease>
    <text>The disease is caused by variants affecting the gene represented in this entry.</text>
</comment>
<comment type="similarity">
    <text evidence="13">Belongs to the POU transcription factor family. Class-4 subfamily.</text>
</comment>
<comment type="online information" name="Hereditary hearing loss homepage">
    <link uri="https://hereditaryhearingloss.org/dominant"/>
    <text>Gene page</text>
</comment>
<gene>
    <name type="primary">POU4F3</name>
    <name type="synonym">BRN3C</name>
</gene>
<name>PO4F3_HUMAN</name>
<dbReference type="EMBL" id="U10061">
    <property type="protein sequence ID" value="AAA57160.1"/>
    <property type="molecule type" value="Genomic_DNA"/>
</dbReference>
<dbReference type="EMBL" id="U10060">
    <property type="protein sequence ID" value="AAA57160.1"/>
    <property type="status" value="JOINED"/>
    <property type="molecule type" value="Genomic_DNA"/>
</dbReference>
<dbReference type="EMBL" id="AF044575">
    <property type="protein sequence ID" value="AAC06203.1"/>
    <property type="molecule type" value="Genomic_DNA"/>
</dbReference>
<dbReference type="EMBL" id="BC104923">
    <property type="protein sequence ID" value="AAI04924.1"/>
    <property type="molecule type" value="mRNA"/>
</dbReference>
<dbReference type="EMBL" id="BC112207">
    <property type="protein sequence ID" value="AAI12208.1"/>
    <property type="molecule type" value="mRNA"/>
</dbReference>
<dbReference type="CCDS" id="CCDS4281.1"/>
<dbReference type="RefSeq" id="NP_002691.1">
    <property type="nucleotide sequence ID" value="NM_002700.3"/>
</dbReference>
<dbReference type="SMR" id="Q15319"/>
<dbReference type="BioGRID" id="111455">
    <property type="interactions" value="12"/>
</dbReference>
<dbReference type="FunCoup" id="Q15319">
    <property type="interactions" value="814"/>
</dbReference>
<dbReference type="IntAct" id="Q15319">
    <property type="interactions" value="9"/>
</dbReference>
<dbReference type="STRING" id="9606.ENSP00000495718"/>
<dbReference type="iPTMnet" id="Q15319"/>
<dbReference type="PhosphoSitePlus" id="Q15319"/>
<dbReference type="SwissPalm" id="Q15319"/>
<dbReference type="BioMuta" id="POU4F3"/>
<dbReference type="DMDM" id="2495302"/>
<dbReference type="MassIVE" id="Q15319"/>
<dbReference type="PaxDb" id="9606-ENSP00000230732"/>
<dbReference type="PeptideAtlas" id="Q15319"/>
<dbReference type="Antibodypedia" id="15803">
    <property type="antibodies" value="290 antibodies from 30 providers"/>
</dbReference>
<dbReference type="DNASU" id="5459"/>
<dbReference type="Ensembl" id="ENST00000646991.2">
    <property type="protein sequence ID" value="ENSP00000495718.1"/>
    <property type="gene ID" value="ENSG00000091010.6"/>
</dbReference>
<dbReference type="GeneID" id="5459"/>
<dbReference type="KEGG" id="hsa:5459"/>
<dbReference type="MANE-Select" id="ENST00000646991.2">
    <property type="protein sequence ID" value="ENSP00000495718.1"/>
    <property type="RefSeq nucleotide sequence ID" value="NM_002700.3"/>
    <property type="RefSeq protein sequence ID" value="NP_002691.1"/>
</dbReference>
<dbReference type="UCSC" id="uc003loa.2">
    <property type="organism name" value="human"/>
</dbReference>
<dbReference type="AGR" id="HGNC:9220"/>
<dbReference type="CTD" id="5459"/>
<dbReference type="DisGeNET" id="5459"/>
<dbReference type="GeneCards" id="POU4F3"/>
<dbReference type="GeneReviews" id="POU4F3"/>
<dbReference type="HGNC" id="HGNC:9220">
    <property type="gene designation" value="POU4F3"/>
</dbReference>
<dbReference type="HPA" id="ENSG00000091010">
    <property type="expression patterns" value="Not detected"/>
</dbReference>
<dbReference type="MalaCards" id="POU4F3"/>
<dbReference type="MIM" id="602459">
    <property type="type" value="phenotype"/>
</dbReference>
<dbReference type="MIM" id="602460">
    <property type="type" value="gene"/>
</dbReference>
<dbReference type="neXtProt" id="NX_Q15319"/>
<dbReference type="OpenTargets" id="ENSG00000091010"/>
<dbReference type="Orphanet" id="90635">
    <property type="disease" value="Rare autosomal dominant non-syndromic sensorineural deafness type DFNA"/>
</dbReference>
<dbReference type="PharmGKB" id="PA33544"/>
<dbReference type="VEuPathDB" id="HostDB:ENSG00000091010"/>
<dbReference type="eggNOG" id="KOG1168">
    <property type="taxonomic scope" value="Eukaryota"/>
</dbReference>
<dbReference type="GeneTree" id="ENSGT00940000160880"/>
<dbReference type="HOGENOM" id="CLU_013065_0_0_1"/>
<dbReference type="InParanoid" id="Q15319"/>
<dbReference type="OMA" id="GMNAKQP"/>
<dbReference type="OrthoDB" id="6358449at2759"/>
<dbReference type="PAN-GO" id="Q15319">
    <property type="GO annotations" value="3 GO annotations based on evolutionary models"/>
</dbReference>
<dbReference type="PhylomeDB" id="Q15319"/>
<dbReference type="TreeFam" id="TF316413"/>
<dbReference type="PathwayCommons" id="Q15319"/>
<dbReference type="SignaLink" id="Q15319"/>
<dbReference type="SIGNOR" id="Q15319"/>
<dbReference type="BioGRID-ORCS" id="5459">
    <property type="hits" value="12 hits in 1161 CRISPR screens"/>
</dbReference>
<dbReference type="GeneWiki" id="POU4F3"/>
<dbReference type="GenomeRNAi" id="5459"/>
<dbReference type="Pharos" id="Q15319">
    <property type="development level" value="Tbio"/>
</dbReference>
<dbReference type="PRO" id="PR:Q15319"/>
<dbReference type="Proteomes" id="UP000005640">
    <property type="component" value="Chromosome 5"/>
</dbReference>
<dbReference type="RNAct" id="Q15319">
    <property type="molecule type" value="protein"/>
</dbReference>
<dbReference type="Bgee" id="ENSG00000091010">
    <property type="expression patterns" value="Expressed in smooth muscle tissue and 3 other cell types or tissues"/>
</dbReference>
<dbReference type="GO" id="GO:0000785">
    <property type="term" value="C:chromatin"/>
    <property type="evidence" value="ECO:0000247"/>
    <property type="project" value="NTNU_SB"/>
</dbReference>
<dbReference type="GO" id="GO:0005737">
    <property type="term" value="C:cytoplasm"/>
    <property type="evidence" value="ECO:0000314"/>
    <property type="project" value="UniProtKB"/>
</dbReference>
<dbReference type="GO" id="GO:0005654">
    <property type="term" value="C:nucleoplasm"/>
    <property type="evidence" value="ECO:0000314"/>
    <property type="project" value="HPA"/>
</dbReference>
<dbReference type="GO" id="GO:0005634">
    <property type="term" value="C:nucleus"/>
    <property type="evidence" value="ECO:0000314"/>
    <property type="project" value="UniProtKB"/>
</dbReference>
<dbReference type="GO" id="GO:0001228">
    <property type="term" value="F:DNA-binding transcription activator activity, RNA polymerase II-specific"/>
    <property type="evidence" value="ECO:0000314"/>
    <property type="project" value="NTNU_SB"/>
</dbReference>
<dbReference type="GO" id="GO:0003700">
    <property type="term" value="F:DNA-binding transcription factor activity"/>
    <property type="evidence" value="ECO:0000304"/>
    <property type="project" value="ProtInc"/>
</dbReference>
<dbReference type="GO" id="GO:0000981">
    <property type="term" value="F:DNA-binding transcription factor activity, RNA polymerase II-specific"/>
    <property type="evidence" value="ECO:0000247"/>
    <property type="project" value="NTNU_SB"/>
</dbReference>
<dbReference type="GO" id="GO:0000978">
    <property type="term" value="F:RNA polymerase II cis-regulatory region sequence-specific DNA binding"/>
    <property type="evidence" value="ECO:0000314"/>
    <property type="project" value="NTNU_SB"/>
</dbReference>
<dbReference type="GO" id="GO:1990837">
    <property type="term" value="F:sequence-specific double-stranded DNA binding"/>
    <property type="evidence" value="ECO:0000314"/>
    <property type="project" value="ARUK-UCL"/>
</dbReference>
<dbReference type="GO" id="GO:0048675">
    <property type="term" value="P:axon extension"/>
    <property type="evidence" value="ECO:0007669"/>
    <property type="project" value="Ensembl"/>
</dbReference>
<dbReference type="GO" id="GO:0042491">
    <property type="term" value="P:inner ear auditory receptor cell differentiation"/>
    <property type="evidence" value="ECO:0007669"/>
    <property type="project" value="Ensembl"/>
</dbReference>
<dbReference type="GO" id="GO:0042472">
    <property type="term" value="P:inner ear morphogenesis"/>
    <property type="evidence" value="ECO:0007669"/>
    <property type="project" value="Ensembl"/>
</dbReference>
<dbReference type="GO" id="GO:0050885">
    <property type="term" value="P:neuromuscular process controlling balance"/>
    <property type="evidence" value="ECO:0007669"/>
    <property type="project" value="Ensembl"/>
</dbReference>
<dbReference type="GO" id="GO:0051402">
    <property type="term" value="P:neuron apoptotic process"/>
    <property type="evidence" value="ECO:0007669"/>
    <property type="project" value="Ensembl"/>
</dbReference>
<dbReference type="GO" id="GO:0045944">
    <property type="term" value="P:positive regulation of transcription by RNA polymerase II"/>
    <property type="evidence" value="ECO:0000314"/>
    <property type="project" value="NTNU_SB"/>
</dbReference>
<dbReference type="GO" id="GO:0006357">
    <property type="term" value="P:regulation of transcription by RNA polymerase II"/>
    <property type="evidence" value="ECO:0000318"/>
    <property type="project" value="GO_Central"/>
</dbReference>
<dbReference type="GO" id="GO:0031290">
    <property type="term" value="P:retinal ganglion cell axon guidance"/>
    <property type="evidence" value="ECO:0007669"/>
    <property type="project" value="Ensembl"/>
</dbReference>
<dbReference type="GO" id="GO:0007605">
    <property type="term" value="P:sensory perception of sound"/>
    <property type="evidence" value="ECO:0000304"/>
    <property type="project" value="ProtInc"/>
</dbReference>
<dbReference type="GO" id="GO:0021562">
    <property type="term" value="P:vestibulocochlear nerve development"/>
    <property type="evidence" value="ECO:0007669"/>
    <property type="project" value="Ensembl"/>
</dbReference>
<dbReference type="GO" id="GO:0007601">
    <property type="term" value="P:visual perception"/>
    <property type="evidence" value="ECO:0000304"/>
    <property type="project" value="ProtInc"/>
</dbReference>
<dbReference type="CDD" id="cd00086">
    <property type="entry name" value="homeodomain"/>
    <property type="match status" value="1"/>
</dbReference>
<dbReference type="FunFam" id="1.10.10.60:FF:000056">
    <property type="entry name" value="POU domain protein"/>
    <property type="match status" value="1"/>
</dbReference>
<dbReference type="FunFam" id="1.10.260.40:FF:000007">
    <property type="entry name" value="POU domain protein"/>
    <property type="match status" value="1"/>
</dbReference>
<dbReference type="Gene3D" id="1.10.10.60">
    <property type="entry name" value="Homeodomain-like"/>
    <property type="match status" value="1"/>
</dbReference>
<dbReference type="Gene3D" id="1.10.260.40">
    <property type="entry name" value="lambda repressor-like DNA-binding domains"/>
    <property type="match status" value="1"/>
</dbReference>
<dbReference type="InterPro" id="IPR001356">
    <property type="entry name" value="HD"/>
</dbReference>
<dbReference type="InterPro" id="IPR017970">
    <property type="entry name" value="Homeobox_CS"/>
</dbReference>
<dbReference type="InterPro" id="IPR009057">
    <property type="entry name" value="Homeodomain-like_sf"/>
</dbReference>
<dbReference type="InterPro" id="IPR010982">
    <property type="entry name" value="Lambda_DNA-bd_dom_sf"/>
</dbReference>
<dbReference type="InterPro" id="IPR013847">
    <property type="entry name" value="POU"/>
</dbReference>
<dbReference type="InterPro" id="IPR000327">
    <property type="entry name" value="POU_dom"/>
</dbReference>
<dbReference type="InterPro" id="IPR050255">
    <property type="entry name" value="POU_domain_TF"/>
</dbReference>
<dbReference type="PANTHER" id="PTHR11636">
    <property type="entry name" value="POU DOMAIN"/>
    <property type="match status" value="1"/>
</dbReference>
<dbReference type="PANTHER" id="PTHR11636:SF43">
    <property type="entry name" value="POU DOMAIN, CLASS 4, TRANSCRIPTION FACTOR 3"/>
    <property type="match status" value="1"/>
</dbReference>
<dbReference type="Pfam" id="PF00046">
    <property type="entry name" value="Homeodomain"/>
    <property type="match status" value="1"/>
</dbReference>
<dbReference type="Pfam" id="PF00157">
    <property type="entry name" value="Pou"/>
    <property type="match status" value="1"/>
</dbReference>
<dbReference type="PRINTS" id="PR00028">
    <property type="entry name" value="POUDOMAIN"/>
</dbReference>
<dbReference type="SMART" id="SM00389">
    <property type="entry name" value="HOX"/>
    <property type="match status" value="1"/>
</dbReference>
<dbReference type="SMART" id="SM00352">
    <property type="entry name" value="POU"/>
    <property type="match status" value="1"/>
</dbReference>
<dbReference type="SUPFAM" id="SSF46689">
    <property type="entry name" value="Homeodomain-like"/>
    <property type="match status" value="1"/>
</dbReference>
<dbReference type="SUPFAM" id="SSF47413">
    <property type="entry name" value="lambda repressor-like DNA-binding domains"/>
    <property type="match status" value="1"/>
</dbReference>
<dbReference type="PROSITE" id="PS00027">
    <property type="entry name" value="HOMEOBOX_1"/>
    <property type="match status" value="1"/>
</dbReference>
<dbReference type="PROSITE" id="PS50071">
    <property type="entry name" value="HOMEOBOX_2"/>
    <property type="match status" value="1"/>
</dbReference>
<dbReference type="PROSITE" id="PS00035">
    <property type="entry name" value="POU_1"/>
    <property type="match status" value="1"/>
</dbReference>
<dbReference type="PROSITE" id="PS00465">
    <property type="entry name" value="POU_2"/>
    <property type="match status" value="1"/>
</dbReference>
<dbReference type="PROSITE" id="PS51179">
    <property type="entry name" value="POU_3"/>
    <property type="match status" value="1"/>
</dbReference>
<reference key="1">
    <citation type="journal article" date="1995" name="J. Neurosci.">
        <title>The Brn-3 family of POU-domain factors: primary structure, binding specificity, and expression in subsets of retinal ganglion cells and somatosensory neurons.</title>
        <authorList>
            <person name="Xiang M."/>
            <person name="Zhou L.-J."/>
            <person name="Macke J.P."/>
            <person name="Yoshioka T."/>
            <person name="Hendry S.H."/>
            <person name="Eddy R.L."/>
            <person name="Shows T.B."/>
            <person name="Nathans J."/>
        </authorList>
    </citation>
    <scope>NUCLEOTIDE SEQUENCE [GENOMIC DNA]</scope>
    <scope>TISSUE SPECIFICITY</scope>
</reference>
<reference key="2">
    <citation type="journal article" date="1998" name="Science">
        <title>Mutation in transcription factor POU4F3 associated with inherited progressive hearing loss in humans.</title>
        <authorList>
            <person name="Vahava O."/>
            <person name="Morell R."/>
            <person name="Lynch E.D."/>
            <person name="Weiss S."/>
            <person name="Kagan M.E."/>
            <person name="Ahituv N."/>
            <person name="Morrow J.E."/>
            <person name="Lee M.K."/>
            <person name="Skvorak A.B."/>
            <person name="Morton C.C."/>
            <person name="Blumenfeld A."/>
            <person name="Frydman M."/>
            <person name="Friedman T.B."/>
            <person name="King M.-C."/>
            <person name="Avraham K.B."/>
        </authorList>
    </citation>
    <scope>NUCLEOTIDE SEQUENCE [GENOMIC DNA]</scope>
    <scope>TISSUE SPECIFICITY</scope>
    <scope>INVOLVEMENT IN DFNA15</scope>
</reference>
<reference key="3">
    <citation type="journal article" date="2004" name="Genome Res.">
        <title>The status, quality, and expansion of the NIH full-length cDNA project: the Mammalian Gene Collection (MGC).</title>
        <authorList>
            <consortium name="The MGC Project Team"/>
        </authorList>
    </citation>
    <scope>NUCLEOTIDE SEQUENCE [LARGE SCALE MRNA]</scope>
</reference>
<reference key="4">
    <citation type="journal article" date="2008" name="Arch. Otolaryngol. Head Neck Surg.">
        <title>Audiometric characteristics of a Dutch family linked to DFNA15 with a novel mutation (p.L289F) in POU4F3.</title>
        <authorList>
            <person name="Pauw R.J."/>
            <person name="van Drunen F.J."/>
            <person name="Collin R.W."/>
            <person name="Huygen P.L."/>
            <person name="Kremer H."/>
            <person name="Cremers C.W."/>
        </authorList>
    </citation>
    <scope>VARIANT DFNA15 PHE-289</scope>
</reference>
<reference key="5">
    <citation type="journal article" date="2008" name="Hum. Mutat.">
        <title>Missense mutations in POU4F3 cause autosomal dominant hearing impairment DFNA15 and affect subcellular localization and DNA binding.</title>
        <authorList>
            <person name="Collin R.W.J."/>
            <person name="Chellappa R."/>
            <person name="Pauw R.-J."/>
            <person name="Vriend G."/>
            <person name="Oostrik J."/>
            <person name="van Drunen W."/>
            <person name="Huygen P.L."/>
            <person name="Admiraal R."/>
            <person name="Hoefsloot L.H."/>
            <person name="Cremers F.P.M."/>
            <person name="Xiang M."/>
            <person name="Cremers C.W.R.J."/>
            <person name="Kremer H."/>
        </authorList>
    </citation>
    <scope>VARIANTS DFNA15 PRO-223 AND PHE-289</scope>
    <scope>CHARACTERIZATION OF VARIANTS DFNA15 PRO-223 AND PHE-289</scope>
    <scope>FUNCTION</scope>
    <scope>DNA-BINDING</scope>
    <scope>SUBCELLULAR LOCATION</scope>
</reference>
<reference key="6">
    <citation type="journal article" date="2012" name="Orphanet J. Rare Dis.">
        <title>Targeted massive parallel sequencing: the effective detection of novel causative mutations associated with hearing loss in small families.</title>
        <authorList>
            <person name="Baek J.I."/>
            <person name="Oh S.K."/>
            <person name="Kim D.B."/>
            <person name="Choi S.Y."/>
            <person name="Kim U.K."/>
            <person name="Lee K.Y."/>
            <person name="Lee S.H."/>
        </authorList>
    </citation>
    <scope>VARIANT DFNA15 LYS-232</scope>
</reference>
<reference key="7">
    <citation type="journal article" date="2013" name="PLoS ONE">
        <title>SNP linkage analysis and whole exome sequencing identify a novel POU4F3 mutation in autosomal dominant late-onset nonsyndromic hearing loss (DFNA15).</title>
        <authorList>
            <person name="Kim H.J."/>
            <person name="Won H.H."/>
            <person name="Park K.J."/>
            <person name="Hong S.H."/>
            <person name="Ki C.S."/>
            <person name="Cho S.S."/>
            <person name="Venselaar H."/>
            <person name="Vriend G."/>
            <person name="Kim J.W."/>
        </authorList>
    </citation>
    <scope>VARIANT DFNA15 LYS-326</scope>
</reference>
<reference key="8">
    <citation type="journal article" date="2014" name="J. Transl. Med.">
        <title>Targeted genomic capture and massively parallel sequencing to identify novel variants causing Chinese hereditary hearing loss.</title>
        <authorList>
            <person name="Wei Q."/>
            <person name="Zhu H."/>
            <person name="Qian X."/>
            <person name="Chen Z."/>
            <person name="Yao J."/>
            <person name="Lu Y."/>
            <person name="Cao X."/>
            <person name="Xing G."/>
        </authorList>
    </citation>
    <scope>VARIANT DFNA15 ARG-164</scope>
</reference>
<reference key="9">
    <citation type="journal article" date="2017" name="PLoS ONE">
        <title>POU4F3 mutation screening in Japanese hearing loss patients: Massively parallel DNA sequencing-based analysis identified novel variants associated with autosomal dominant hearing loss.</title>
        <authorList>
            <person name="Kitano T."/>
            <person name="Miyagawa M."/>
            <person name="Nishio S.Y."/>
            <person name="Moteki H."/>
            <person name="Oda K."/>
            <person name="Ohyama K."/>
            <person name="Miyazaki H."/>
            <person name="Hidaka H."/>
            <person name="Nakamura K.I."/>
            <person name="Murata T."/>
            <person name="Matsuoka R."/>
            <person name="Ohta Y."/>
            <person name="Nishiyama N."/>
            <person name="Kumakawa K."/>
            <person name="Furutate S."/>
            <person name="Iwasaki S."/>
            <person name="Yamada T."/>
            <person name="Ohta Y."/>
            <person name="Uehara N."/>
            <person name="Noguchi Y."/>
            <person name="Usami S.I."/>
        </authorList>
    </citation>
    <scope>VARIANTS DFNA15 VAL-64; 143-GLN--HIS-338 DEL; 192-GLU--HIS-338 DEL; TYR-194; LEU-222; TYR-240; VAL-281; LEU-299 AND 326-ARG--HIS-338 DEL</scope>
</reference>
<reference key="10">
    <citation type="journal article" date="2017" name="Sci. Rep.">
        <title>A novel missense variant in the nuclear localization signal of POU4F3 causes autosomal dominant non-syndromic hearing loss.</title>
        <authorList>
            <person name="Lin Y.H."/>
            <person name="Lin Y.H."/>
            <person name="Lu Y.C."/>
            <person name="Liu T.C."/>
            <person name="Chen C.Y."/>
            <person name="Hsu C.J."/>
            <person name="Chen P.L."/>
            <person name="Wu C.C."/>
        </authorList>
    </citation>
    <scope>VARIANT DFNA15 GLU-328</scope>
    <scope>CHARACTERIZATION OF VARIANT DFNA15 GLU-328</scope>
    <scope>SUBCELLULAR LOCATION</scope>
</reference>
<proteinExistence type="evidence at protein level"/>